<organism>
    <name type="scientific">Paralichthys olivaceus</name>
    <name type="common">Bastard halibut</name>
    <name type="synonym">Hippoglossus olivaceus</name>
    <dbReference type="NCBI Taxonomy" id="8255"/>
    <lineage>
        <taxon>Eukaryota</taxon>
        <taxon>Metazoa</taxon>
        <taxon>Chordata</taxon>
        <taxon>Craniata</taxon>
        <taxon>Vertebrata</taxon>
        <taxon>Euteleostomi</taxon>
        <taxon>Actinopterygii</taxon>
        <taxon>Neopterygii</taxon>
        <taxon>Teleostei</taxon>
        <taxon>Neoteleostei</taxon>
        <taxon>Acanthomorphata</taxon>
        <taxon>Carangaria</taxon>
        <taxon>Pleuronectiformes</taxon>
        <taxon>Pleuronectoidei</taxon>
        <taxon>Paralichthyidae</taxon>
        <taxon>Paralichthys</taxon>
    </lineage>
</organism>
<protein>
    <recommendedName>
        <fullName evidence="1 7">Cystatin-C</fullName>
    </recommendedName>
    <alternativeName>
        <fullName evidence="1 5">PoCystatin-C</fullName>
    </alternativeName>
</protein>
<dbReference type="EMBL" id="EU597233">
    <property type="protein sequence ID" value="ACC86115.1"/>
    <property type="molecule type" value="mRNA"/>
</dbReference>
<dbReference type="RefSeq" id="XP_019948069.1">
    <property type="nucleotide sequence ID" value="XM_020092510.2"/>
</dbReference>
<dbReference type="SMR" id="B2Z450"/>
<dbReference type="GeneID" id="109632944"/>
<dbReference type="KEGG" id="pov:109632944"/>
<dbReference type="OrthoDB" id="1908104at2759"/>
<dbReference type="GO" id="GO:0005737">
    <property type="term" value="C:cytoplasm"/>
    <property type="evidence" value="ECO:0007669"/>
    <property type="project" value="TreeGrafter"/>
</dbReference>
<dbReference type="GO" id="GO:0005576">
    <property type="term" value="C:extracellular region"/>
    <property type="evidence" value="ECO:0000250"/>
    <property type="project" value="UniProtKB"/>
</dbReference>
<dbReference type="GO" id="GO:0005615">
    <property type="term" value="C:extracellular space"/>
    <property type="evidence" value="ECO:0007669"/>
    <property type="project" value="TreeGrafter"/>
</dbReference>
<dbReference type="GO" id="GO:0031982">
    <property type="term" value="C:vesicle"/>
    <property type="evidence" value="ECO:0007669"/>
    <property type="project" value="TreeGrafter"/>
</dbReference>
<dbReference type="GO" id="GO:0004869">
    <property type="term" value="F:cysteine-type endopeptidase inhibitor activity"/>
    <property type="evidence" value="ECO:0000314"/>
    <property type="project" value="UniProtKB"/>
</dbReference>
<dbReference type="CDD" id="cd00042">
    <property type="entry name" value="CY"/>
    <property type="match status" value="1"/>
</dbReference>
<dbReference type="FunFam" id="3.10.450.10:FF:000004">
    <property type="entry name" value="Cystatin C"/>
    <property type="match status" value="1"/>
</dbReference>
<dbReference type="Gene3D" id="3.10.450.10">
    <property type="match status" value="1"/>
</dbReference>
<dbReference type="InterPro" id="IPR000010">
    <property type="entry name" value="Cystatin_dom"/>
</dbReference>
<dbReference type="InterPro" id="IPR046350">
    <property type="entry name" value="Cystatin_sf"/>
</dbReference>
<dbReference type="InterPro" id="IPR018073">
    <property type="entry name" value="Prot_inh_cystat_CS"/>
</dbReference>
<dbReference type="PANTHER" id="PTHR46186">
    <property type="entry name" value="CYSTATIN"/>
    <property type="match status" value="1"/>
</dbReference>
<dbReference type="PANTHER" id="PTHR46186:SF12">
    <property type="entry name" value="CYSTATIN C (AMYLOID ANGIOPATHY AND CEREBRAL HEMORRHAGE)-RELATED"/>
    <property type="match status" value="1"/>
</dbReference>
<dbReference type="Pfam" id="PF00031">
    <property type="entry name" value="Cystatin"/>
    <property type="match status" value="1"/>
</dbReference>
<dbReference type="SMART" id="SM00043">
    <property type="entry name" value="CY"/>
    <property type="match status" value="1"/>
</dbReference>
<dbReference type="SUPFAM" id="SSF54403">
    <property type="entry name" value="Cystatin/monellin"/>
    <property type="match status" value="1"/>
</dbReference>
<dbReference type="PROSITE" id="PS00287">
    <property type="entry name" value="CYSTATIN"/>
    <property type="match status" value="1"/>
</dbReference>
<comment type="function">
    <text evidence="4">Thiol protease inhibitor. Has high papain inhibitory activity and inhibits to a lesser extent fish cathepsins L, S, K, F, X and bovine cathepsin B in vitro.</text>
</comment>
<comment type="biophysicochemical properties">
    <phDependence>
        <text evidence="4">Optimum pH is 5-6 and pH 6-8 for papain and bovine cathepsin B, respectively.</text>
    </phDependence>
    <temperatureDependence>
        <text evidence="4">Stable between 20-40 degrees Celsius.</text>
    </temperatureDependence>
</comment>
<comment type="subcellular location">
    <subcellularLocation>
        <location evidence="2">Secreted</location>
    </subcellularLocation>
</comment>
<comment type="tissue specificity">
    <text evidence="4">Ubiquitously expressed in normal tissues including brain, eye, gill, heart, gullet, liver, spleen, stomach, pyloric ceca, intestine, kidney and muscle. Expressed, but not up-regulated, in lipopolysaccharide (LPS)-stimulated tissues including kidney, spleen, muscle and gill.</text>
</comment>
<comment type="similarity">
    <text evidence="6">Belongs to the cystatin family.</text>
</comment>
<sequence length="126" mass="14027">MKMLVFPVLAALFAVGLGNLVGAPRDINISEAQDALDFAVAKHNSGTNDMFLRQVAEVVRVQRQVVSGNKYIITVKMAKTPCRKDRVVNEVCEIHKDPALAQPYECTFSVWSRPWIPDLQLVGEKC</sequence>
<keyword id="KW-1015">Disulfide bond</keyword>
<keyword id="KW-0646">Protease inhibitor</keyword>
<keyword id="KW-0964">Secreted</keyword>
<keyword id="KW-0732">Signal</keyword>
<keyword id="KW-0789">Thiol protease inhibitor</keyword>
<name>CYTC_PAROL</name>
<accession>B2Z450</accession>
<feature type="signal peptide" evidence="3">
    <location>
        <begin position="1"/>
        <end position="18"/>
    </location>
</feature>
<feature type="chain" id="PRO_0000434650" description="Cystatin-C" evidence="3">
    <location>
        <begin position="19"/>
        <end position="126"/>
    </location>
</feature>
<feature type="domain" description="Cystatin" evidence="3">
    <location>
        <begin position="22"/>
        <end position="115"/>
    </location>
</feature>
<feature type="short sequence motif" description="Secondary area of contact" evidence="1">
    <location>
        <begin position="64"/>
        <end position="68"/>
    </location>
</feature>
<feature type="site" description="Reactive site" evidence="1">
    <location>
        <position position="22"/>
    </location>
</feature>
<feature type="disulfide bond" evidence="2">
    <location>
        <begin position="82"/>
        <end position="92"/>
    </location>
</feature>
<feature type="disulfide bond" evidence="2">
    <location>
        <begin position="106"/>
        <end position="126"/>
    </location>
</feature>
<reference key="1">
    <citation type="journal article" date="2013" name="Appl. Biochem. Biotechnol.">
        <title>Olive flounder (Paralichthys olivaceus) cystatin C: cloning, mRNA expression, and enzymatic characterization of olive flounder cystatin C.</title>
        <authorList>
            <person name="Ahn S.J."/>
            <person name="Bak H.J."/>
            <person name="Park J.H."/>
            <person name="Lee J.Y."/>
            <person name="Kim N.Y."/>
            <person name="Han J.W."/>
            <person name="Jo H.I."/>
            <person name="Chung J.K."/>
            <person name="Lee H.H."/>
        </authorList>
    </citation>
    <scope>NUCLEOTIDE SEQUENCE [MRNA]</scope>
    <scope>FUNCTION</scope>
    <scope>BIOPHYSICOCHEMICAL PROPERTIES</scope>
    <scope>TISSUE SPECIFICITY</scope>
    <scope>PHYLOGENETIC ANALYSIS</scope>
    <source>
        <tissue evidence="5">Muscle</tissue>
    </source>
</reference>
<evidence type="ECO:0000250" key="1">
    <source>
        <dbReference type="UniProtKB" id="P04080"/>
    </source>
</evidence>
<evidence type="ECO:0000250" key="2">
    <source>
        <dbReference type="UniProtKB" id="Q98967"/>
    </source>
</evidence>
<evidence type="ECO:0000255" key="3"/>
<evidence type="ECO:0000269" key="4">
    <source>
    </source>
</evidence>
<evidence type="ECO:0000303" key="5">
    <source>
    </source>
</evidence>
<evidence type="ECO:0000305" key="6"/>
<evidence type="ECO:0000312" key="7">
    <source>
        <dbReference type="EMBL" id="ACC86115.1"/>
    </source>
</evidence>
<proteinExistence type="evidence at protein level"/>